<accession>P0DP45</accession>
<accession>O24816</accession>
<accession>Q9S646</accession>
<reference key="1">
    <citation type="journal article" date="1999" name="Appl. Environ. Microbiol.">
        <title>Cloning and characterization of polyphosphate kinase and exopolyphosphatase genes from Pseudomonas aeruginosa 8830.</title>
        <authorList>
            <person name="Zago A."/>
            <person name="Chugani S."/>
            <person name="Chakrabarty A.M."/>
        </authorList>
    </citation>
    <scope>NUCLEOTIDE SEQUENCE [GENOMIC DNA]</scope>
    <scope>FUNCTION</scope>
    <scope>CATALYTIC ACTIVITY</scope>
    <source>
        <strain>8830</strain>
    </source>
</reference>
<organism>
    <name type="scientific">Pseudomonas aeruginosa</name>
    <dbReference type="NCBI Taxonomy" id="287"/>
    <lineage>
        <taxon>Bacteria</taxon>
        <taxon>Pseudomonadati</taxon>
        <taxon>Pseudomonadota</taxon>
        <taxon>Gammaproteobacteria</taxon>
        <taxon>Pseudomonadales</taxon>
        <taxon>Pseudomonadaceae</taxon>
        <taxon>Pseudomonas</taxon>
    </lineage>
</organism>
<evidence type="ECO:0000255" key="1">
    <source>
        <dbReference type="HAMAP-Rule" id="MF_00347"/>
    </source>
</evidence>
<evidence type="ECO:0000269" key="2">
    <source>
    </source>
</evidence>
<evidence type="ECO:0000303" key="3">
    <source>
    </source>
</evidence>
<name>PPK1_PSEAI</name>
<feature type="chain" id="PRO_0000440098" description="Polyphosphate kinase">
    <location>
        <begin position="1"/>
        <end position="690"/>
    </location>
</feature>
<feature type="active site" description="Phosphohistidine intermediate" evidence="1">
    <location>
        <position position="435"/>
    </location>
</feature>
<feature type="binding site" evidence="1">
    <location>
        <position position="45"/>
    </location>
    <ligand>
        <name>ATP</name>
        <dbReference type="ChEBI" id="CHEBI:30616"/>
    </ligand>
</feature>
<feature type="binding site" evidence="1">
    <location>
        <position position="375"/>
    </location>
    <ligand>
        <name>Mg(2+)</name>
        <dbReference type="ChEBI" id="CHEBI:18420"/>
    </ligand>
</feature>
<feature type="binding site" evidence="1">
    <location>
        <position position="405"/>
    </location>
    <ligand>
        <name>Mg(2+)</name>
        <dbReference type="ChEBI" id="CHEBI:18420"/>
    </ligand>
</feature>
<feature type="binding site" evidence="1">
    <location>
        <position position="468"/>
    </location>
    <ligand>
        <name>ATP</name>
        <dbReference type="ChEBI" id="CHEBI:30616"/>
    </ligand>
</feature>
<feature type="binding site" evidence="1">
    <location>
        <position position="564"/>
    </location>
    <ligand>
        <name>ATP</name>
        <dbReference type="ChEBI" id="CHEBI:30616"/>
    </ligand>
</feature>
<feature type="binding site" evidence="1">
    <location>
        <position position="592"/>
    </location>
    <ligand>
        <name>ATP</name>
        <dbReference type="ChEBI" id="CHEBI:30616"/>
    </ligand>
</feature>
<sequence length="690" mass="78293">MDDSSLYIHRELSQLQFNIRVLEQALDESYPLLERLKFLLIFSSNLDEFFEIRIAGLKKQITFAREQAGADGLLPHQALARISELVHEQVSRQYRILNETLLPELAKHQIRFIRRRHWTLKIKTWVRRFFRDEIAPIITPIGLDPTHPFPLLVNKSLNFIVELEGMDAFGRDSGLAIIPAPRLLPRIIRLPEDVGGEGDNYVFLSSMIHAHADDLFPGMKVKGCYQFRLTRNADLSVDTEDVEDLARALRGELFSRRYGDAVRLEVVDTCPQNLTNYLLKQFGLSESELYKVSGPVNLTRLFSVTGLESHPELQYPPFTPAIPRLLQKKENLFNVLSKLDVLLMHPFESFTPVIDLLRQAAKDPNVLAIKQTLYRSGANSEIVDALVEAARNGKEVTAVIELRARFDEESNLQLASRLQQAGAVVIYGVVGFKTHAKMMLILRREDGELRRYAHLGTGNYHAGNARLYTDYSLLTADVALCEDLHKLFNQLIGMGKTLRMKKLLHAPFTLKKNLLEMINREAAQAALGQPAHIMAKVNSLTDPKVIRALYKASQAGVRIDLVVRGMCCLRPGIPGVSHNIHVRSIIGRFLEHSRIYYFLNGGDEKLYLSSADWMERNLDMRVETCFPVEGKKLVQRVKKELETYLTDNTQAWVLQADGSYQRLSPTGNQNPRNTQATLLEKLAAPVLTAR</sequence>
<gene>
    <name evidence="1 3" type="primary">ppk</name>
</gene>
<protein>
    <recommendedName>
        <fullName evidence="1 3">Polyphosphate kinase</fullName>
        <ecNumber evidence="1 2">2.7.4.1</ecNumber>
    </recommendedName>
    <alternativeName>
        <fullName evidence="1">ATP-polyphosphate phosphotransferase</fullName>
    </alternativeName>
    <alternativeName>
        <fullName evidence="1">Polyphosphoric acid kinase</fullName>
    </alternativeName>
</protein>
<proteinExistence type="evidence at protein level"/>
<comment type="function">
    <text evidence="1 2">Catalyzes the reversible transfer of the terminal phosphate of ATP to form a long-chain polyphosphate (polyP).</text>
</comment>
<comment type="catalytic activity">
    <reaction evidence="1 2">
        <text>[phosphate](n) + ATP = [phosphate](n+1) + ADP</text>
        <dbReference type="Rhea" id="RHEA:19573"/>
        <dbReference type="Rhea" id="RHEA-COMP:9859"/>
        <dbReference type="Rhea" id="RHEA-COMP:14280"/>
        <dbReference type="ChEBI" id="CHEBI:16838"/>
        <dbReference type="ChEBI" id="CHEBI:30616"/>
        <dbReference type="ChEBI" id="CHEBI:456216"/>
        <dbReference type="EC" id="2.7.4.1"/>
    </reaction>
</comment>
<comment type="cofactor">
    <cofactor evidence="1">
        <name>Mg(2+)</name>
        <dbReference type="ChEBI" id="CHEBI:18420"/>
    </cofactor>
</comment>
<comment type="PTM">
    <text evidence="1">An intermediate of this reaction is the autophosphorylated ppk in which a phosphate is covalently linked to a histidine residue through a N-P bond.</text>
</comment>
<comment type="similarity">
    <text evidence="1">Belongs to the polyphosphate kinase 1 (PPK1) family.</text>
</comment>
<dbReference type="EC" id="2.7.4.1" evidence="1 2"/>
<dbReference type="EMBL" id="AF087931">
    <property type="protein sequence ID" value="AAD29112.1"/>
    <property type="molecule type" value="Genomic_DNA"/>
</dbReference>
<dbReference type="SMR" id="P0DP45"/>
<dbReference type="eggNOG" id="COG0855">
    <property type="taxonomic scope" value="Bacteria"/>
</dbReference>
<dbReference type="BRENDA" id="2.7.4.1">
    <property type="organism ID" value="5087"/>
</dbReference>
<dbReference type="GO" id="GO:0009358">
    <property type="term" value="C:polyphosphate kinase complex"/>
    <property type="evidence" value="ECO:0007669"/>
    <property type="project" value="InterPro"/>
</dbReference>
<dbReference type="GO" id="GO:0005524">
    <property type="term" value="F:ATP binding"/>
    <property type="evidence" value="ECO:0007669"/>
    <property type="project" value="UniProtKB-KW"/>
</dbReference>
<dbReference type="GO" id="GO:0046872">
    <property type="term" value="F:metal ion binding"/>
    <property type="evidence" value="ECO:0007669"/>
    <property type="project" value="UniProtKB-KW"/>
</dbReference>
<dbReference type="GO" id="GO:0008976">
    <property type="term" value="F:polyphosphate kinase activity"/>
    <property type="evidence" value="ECO:0007669"/>
    <property type="project" value="UniProtKB-UniRule"/>
</dbReference>
<dbReference type="GO" id="GO:0006799">
    <property type="term" value="P:polyphosphate biosynthetic process"/>
    <property type="evidence" value="ECO:0007669"/>
    <property type="project" value="UniProtKB-UniRule"/>
</dbReference>
<dbReference type="CDD" id="cd09165">
    <property type="entry name" value="PLDc_PaPPK1_C1_like"/>
    <property type="match status" value="1"/>
</dbReference>
<dbReference type="CDD" id="cd09168">
    <property type="entry name" value="PLDc_PaPPK1_C2_like"/>
    <property type="match status" value="1"/>
</dbReference>
<dbReference type="Gene3D" id="3.30.870.10">
    <property type="entry name" value="Endonuclease Chain A"/>
    <property type="match status" value="2"/>
</dbReference>
<dbReference type="Gene3D" id="3.30.1840.10">
    <property type="entry name" value="Polyphosphate kinase middle domain"/>
    <property type="match status" value="1"/>
</dbReference>
<dbReference type="Gene3D" id="1.20.58.310">
    <property type="entry name" value="Polyphosphate kinase N-terminal domain"/>
    <property type="match status" value="1"/>
</dbReference>
<dbReference type="HAMAP" id="MF_00347">
    <property type="entry name" value="Polyphosphate_kinase"/>
    <property type="match status" value="1"/>
</dbReference>
<dbReference type="InterPro" id="IPR003414">
    <property type="entry name" value="PP_kinase"/>
</dbReference>
<dbReference type="InterPro" id="IPR041108">
    <property type="entry name" value="PP_kinase_C_1"/>
</dbReference>
<dbReference type="InterPro" id="IPR024953">
    <property type="entry name" value="PP_kinase_middle"/>
</dbReference>
<dbReference type="InterPro" id="IPR036830">
    <property type="entry name" value="PP_kinase_middle_dom_sf"/>
</dbReference>
<dbReference type="InterPro" id="IPR025200">
    <property type="entry name" value="PPK_C_dom2"/>
</dbReference>
<dbReference type="InterPro" id="IPR025198">
    <property type="entry name" value="PPK_N_dom"/>
</dbReference>
<dbReference type="InterPro" id="IPR036832">
    <property type="entry name" value="PPK_N_dom_sf"/>
</dbReference>
<dbReference type="NCBIfam" id="TIGR03705">
    <property type="entry name" value="poly_P_kin"/>
    <property type="match status" value="1"/>
</dbReference>
<dbReference type="NCBIfam" id="NF003917">
    <property type="entry name" value="PRK05443.1-1"/>
    <property type="match status" value="1"/>
</dbReference>
<dbReference type="NCBIfam" id="NF003918">
    <property type="entry name" value="PRK05443.1-2"/>
    <property type="match status" value="1"/>
</dbReference>
<dbReference type="NCBIfam" id="NF003921">
    <property type="entry name" value="PRK05443.2-2"/>
    <property type="match status" value="1"/>
</dbReference>
<dbReference type="PANTHER" id="PTHR30218">
    <property type="entry name" value="POLYPHOSPHATE KINASE"/>
    <property type="match status" value="1"/>
</dbReference>
<dbReference type="PANTHER" id="PTHR30218:SF0">
    <property type="entry name" value="POLYPHOSPHATE KINASE"/>
    <property type="match status" value="1"/>
</dbReference>
<dbReference type="Pfam" id="PF02503">
    <property type="entry name" value="PP_kinase"/>
    <property type="match status" value="1"/>
</dbReference>
<dbReference type="Pfam" id="PF13090">
    <property type="entry name" value="PP_kinase_C"/>
    <property type="match status" value="1"/>
</dbReference>
<dbReference type="Pfam" id="PF17941">
    <property type="entry name" value="PP_kinase_C_1"/>
    <property type="match status" value="1"/>
</dbReference>
<dbReference type="Pfam" id="PF13089">
    <property type="entry name" value="PP_kinase_N"/>
    <property type="match status" value="1"/>
</dbReference>
<dbReference type="PIRSF" id="PIRSF015589">
    <property type="entry name" value="PP_kinase"/>
    <property type="match status" value="1"/>
</dbReference>
<dbReference type="SUPFAM" id="SSF56024">
    <property type="entry name" value="Phospholipase D/nuclease"/>
    <property type="match status" value="2"/>
</dbReference>
<dbReference type="SUPFAM" id="SSF143724">
    <property type="entry name" value="PHP14-like"/>
    <property type="match status" value="1"/>
</dbReference>
<dbReference type="SUPFAM" id="SSF140356">
    <property type="entry name" value="PPK N-terminal domain-like"/>
    <property type="match status" value="1"/>
</dbReference>
<keyword id="KW-0067">ATP-binding</keyword>
<keyword id="KW-0418">Kinase</keyword>
<keyword id="KW-0460">Magnesium</keyword>
<keyword id="KW-0479">Metal-binding</keyword>
<keyword id="KW-0547">Nucleotide-binding</keyword>
<keyword id="KW-0597">Phosphoprotein</keyword>
<keyword id="KW-0808">Transferase</keyword>